<keyword id="KW-0067">ATP-binding</keyword>
<keyword id="KW-0143">Chaperone</keyword>
<keyword id="KW-0963">Cytoplasm</keyword>
<keyword id="KW-0413">Isomerase</keyword>
<keyword id="KW-0547">Nucleotide-binding</keyword>
<keyword id="KW-0346">Stress response</keyword>
<evidence type="ECO:0000255" key="1">
    <source>
        <dbReference type="HAMAP-Rule" id="MF_00600"/>
    </source>
</evidence>
<dbReference type="EC" id="5.6.1.7" evidence="1"/>
<dbReference type="EMBL" id="CP000829">
    <property type="protein sequence ID" value="ACI61966.1"/>
    <property type="molecule type" value="Genomic_DNA"/>
</dbReference>
<dbReference type="SMR" id="B5XIW7"/>
<dbReference type="KEGG" id="soz:Spy49_1715c"/>
<dbReference type="HOGENOM" id="CLU_016503_3_0_9"/>
<dbReference type="Proteomes" id="UP000001039">
    <property type="component" value="Chromosome"/>
</dbReference>
<dbReference type="GO" id="GO:0005737">
    <property type="term" value="C:cytoplasm"/>
    <property type="evidence" value="ECO:0007669"/>
    <property type="project" value="UniProtKB-SubCell"/>
</dbReference>
<dbReference type="GO" id="GO:0005524">
    <property type="term" value="F:ATP binding"/>
    <property type="evidence" value="ECO:0007669"/>
    <property type="project" value="UniProtKB-UniRule"/>
</dbReference>
<dbReference type="GO" id="GO:0140662">
    <property type="term" value="F:ATP-dependent protein folding chaperone"/>
    <property type="evidence" value="ECO:0007669"/>
    <property type="project" value="InterPro"/>
</dbReference>
<dbReference type="GO" id="GO:0016853">
    <property type="term" value="F:isomerase activity"/>
    <property type="evidence" value="ECO:0007669"/>
    <property type="project" value="UniProtKB-KW"/>
</dbReference>
<dbReference type="GO" id="GO:0051082">
    <property type="term" value="F:unfolded protein binding"/>
    <property type="evidence" value="ECO:0007669"/>
    <property type="project" value="UniProtKB-UniRule"/>
</dbReference>
<dbReference type="GO" id="GO:0042026">
    <property type="term" value="P:protein refolding"/>
    <property type="evidence" value="ECO:0007669"/>
    <property type="project" value="UniProtKB-UniRule"/>
</dbReference>
<dbReference type="CDD" id="cd03344">
    <property type="entry name" value="GroEL"/>
    <property type="match status" value="1"/>
</dbReference>
<dbReference type="FunFam" id="1.10.560.10:FF:000001">
    <property type="entry name" value="60 kDa chaperonin"/>
    <property type="match status" value="1"/>
</dbReference>
<dbReference type="FunFam" id="3.50.7.10:FF:000001">
    <property type="entry name" value="60 kDa chaperonin"/>
    <property type="match status" value="1"/>
</dbReference>
<dbReference type="Gene3D" id="3.50.7.10">
    <property type="entry name" value="GroEL"/>
    <property type="match status" value="1"/>
</dbReference>
<dbReference type="Gene3D" id="1.10.560.10">
    <property type="entry name" value="GroEL-like equatorial domain"/>
    <property type="match status" value="1"/>
</dbReference>
<dbReference type="Gene3D" id="3.30.260.10">
    <property type="entry name" value="TCP-1-like chaperonin intermediate domain"/>
    <property type="match status" value="1"/>
</dbReference>
<dbReference type="HAMAP" id="MF_00600">
    <property type="entry name" value="CH60"/>
    <property type="match status" value="1"/>
</dbReference>
<dbReference type="InterPro" id="IPR018370">
    <property type="entry name" value="Chaperonin_Cpn60_CS"/>
</dbReference>
<dbReference type="InterPro" id="IPR001844">
    <property type="entry name" value="Cpn60/GroEL"/>
</dbReference>
<dbReference type="InterPro" id="IPR002423">
    <property type="entry name" value="Cpn60/GroEL/TCP-1"/>
</dbReference>
<dbReference type="InterPro" id="IPR027409">
    <property type="entry name" value="GroEL-like_apical_dom_sf"/>
</dbReference>
<dbReference type="InterPro" id="IPR027413">
    <property type="entry name" value="GROEL-like_equatorial_sf"/>
</dbReference>
<dbReference type="InterPro" id="IPR027410">
    <property type="entry name" value="TCP-1-like_intermed_sf"/>
</dbReference>
<dbReference type="NCBIfam" id="TIGR02348">
    <property type="entry name" value="GroEL"/>
    <property type="match status" value="1"/>
</dbReference>
<dbReference type="NCBIfam" id="NF000592">
    <property type="entry name" value="PRK00013.1"/>
    <property type="match status" value="1"/>
</dbReference>
<dbReference type="NCBIfam" id="NF009487">
    <property type="entry name" value="PRK12849.1"/>
    <property type="match status" value="1"/>
</dbReference>
<dbReference type="NCBIfam" id="NF009488">
    <property type="entry name" value="PRK12850.1"/>
    <property type="match status" value="1"/>
</dbReference>
<dbReference type="NCBIfam" id="NF009489">
    <property type="entry name" value="PRK12851.1"/>
    <property type="match status" value="1"/>
</dbReference>
<dbReference type="PANTHER" id="PTHR45633">
    <property type="entry name" value="60 KDA HEAT SHOCK PROTEIN, MITOCHONDRIAL"/>
    <property type="match status" value="1"/>
</dbReference>
<dbReference type="Pfam" id="PF00118">
    <property type="entry name" value="Cpn60_TCP1"/>
    <property type="match status" value="1"/>
</dbReference>
<dbReference type="PRINTS" id="PR00298">
    <property type="entry name" value="CHAPERONIN60"/>
</dbReference>
<dbReference type="SUPFAM" id="SSF52029">
    <property type="entry name" value="GroEL apical domain-like"/>
    <property type="match status" value="1"/>
</dbReference>
<dbReference type="SUPFAM" id="SSF48592">
    <property type="entry name" value="GroEL equatorial domain-like"/>
    <property type="match status" value="1"/>
</dbReference>
<dbReference type="SUPFAM" id="SSF54849">
    <property type="entry name" value="GroEL-intermediate domain like"/>
    <property type="match status" value="1"/>
</dbReference>
<dbReference type="PROSITE" id="PS00296">
    <property type="entry name" value="CHAPERONINS_CPN60"/>
    <property type="match status" value="1"/>
</dbReference>
<name>CH60_STRPZ</name>
<proteinExistence type="inferred from homology"/>
<feature type="chain" id="PRO_1000130067" description="Chaperonin GroEL">
    <location>
        <begin position="1"/>
        <end position="543"/>
    </location>
</feature>
<feature type="binding site" evidence="1">
    <location>
        <begin position="29"/>
        <end position="32"/>
    </location>
    <ligand>
        <name>ATP</name>
        <dbReference type="ChEBI" id="CHEBI:30616"/>
    </ligand>
</feature>
<feature type="binding site" evidence="1">
    <location>
        <begin position="86"/>
        <end position="90"/>
    </location>
    <ligand>
        <name>ATP</name>
        <dbReference type="ChEBI" id="CHEBI:30616"/>
    </ligand>
</feature>
<feature type="binding site" evidence="1">
    <location>
        <position position="413"/>
    </location>
    <ligand>
        <name>ATP</name>
        <dbReference type="ChEBI" id="CHEBI:30616"/>
    </ligand>
</feature>
<feature type="binding site" evidence="1">
    <location>
        <begin position="476"/>
        <end position="478"/>
    </location>
    <ligand>
        <name>ATP</name>
        <dbReference type="ChEBI" id="CHEBI:30616"/>
    </ligand>
</feature>
<feature type="binding site" evidence="1">
    <location>
        <position position="492"/>
    </location>
    <ligand>
        <name>ATP</name>
        <dbReference type="ChEBI" id="CHEBI:30616"/>
    </ligand>
</feature>
<comment type="function">
    <text evidence="1">Together with its co-chaperonin GroES, plays an essential role in assisting protein folding. The GroEL-GroES system forms a nano-cage that allows encapsulation of the non-native substrate proteins and provides a physical environment optimized to promote and accelerate protein folding.</text>
</comment>
<comment type="catalytic activity">
    <reaction evidence="1">
        <text>ATP + H2O + a folded polypeptide = ADP + phosphate + an unfolded polypeptide.</text>
        <dbReference type="EC" id="5.6.1.7"/>
    </reaction>
</comment>
<comment type="subunit">
    <text evidence="1">Forms a cylinder of 14 subunits composed of two heptameric rings stacked back-to-back. Interacts with the co-chaperonin GroES.</text>
</comment>
<comment type="subcellular location">
    <subcellularLocation>
        <location evidence="1">Cytoplasm</location>
    </subcellularLocation>
</comment>
<comment type="similarity">
    <text evidence="1">Belongs to the chaperonin (HSP60) family.</text>
</comment>
<gene>
    <name evidence="1" type="primary">groEL</name>
    <name evidence="1" type="synonym">groL</name>
    <name type="ordered locus">Spy49_1715c</name>
</gene>
<sequence length="543" mass="57038">MAKDIKFSADARAAMVRGVDMLADTVKVTLGPKGRNVVLEKAFGSPLITNDGVTIAKEIELEDHFENMGAKLVSEVASKTNDIAGDGTTTATVLTQAIVHEGLKNVTAGANPIGIRRGIETATATAVEALKAIAQPVSGKEAIAQVAAVSSRSEKVGEYISEAMERVGNDGVITIEESRGMETELEVVEGMQFDRGYLSQYMVTDNEKMVADLENPFILITDKKVSNIQDILPLLEEVLKTNRPLLIIADDVDGEALPTLVLNKIRGTFSVVAVKAPGFGDRRKAMLEDIAILTGGTVITEDLGLELKDATMTALGQAAKITVDKDSTVIVEGSGSSEAIANRIALIKSQLETTTSDFDREKLQERLAKLAGGVAVIKVGAPTETALKEMKLRIEDALNATRAAVEEGIVAGGGTALITVIEKVAALELEGDDATGRNIVLRALEEPVRQIALNAGYEGSVVIDKLKNSPAGTGFNAATGEWVDMIKTGIIDPVKVTRSALQNAASVASLILTTEAVVANKPEPAAPAPAMPAGMDPGMMGGF</sequence>
<reference key="1">
    <citation type="journal article" date="2008" name="J. Bacteriol.">
        <title>Genome sequence of a nephritogenic and highly transformable M49 strain of Streptococcus pyogenes.</title>
        <authorList>
            <person name="McShan W.M."/>
            <person name="Ferretti J.J."/>
            <person name="Karasawa T."/>
            <person name="Suvorov A.N."/>
            <person name="Lin S."/>
            <person name="Qin B."/>
            <person name="Jia H."/>
            <person name="Kenton S."/>
            <person name="Najar F."/>
            <person name="Wu H."/>
            <person name="Scott J."/>
            <person name="Roe B.A."/>
            <person name="Savic D.J."/>
        </authorList>
    </citation>
    <scope>NUCLEOTIDE SEQUENCE [LARGE SCALE GENOMIC DNA]</scope>
    <source>
        <strain>NZ131</strain>
    </source>
</reference>
<accession>B5XIW7</accession>
<organism>
    <name type="scientific">Streptococcus pyogenes serotype M49 (strain NZ131)</name>
    <dbReference type="NCBI Taxonomy" id="471876"/>
    <lineage>
        <taxon>Bacteria</taxon>
        <taxon>Bacillati</taxon>
        <taxon>Bacillota</taxon>
        <taxon>Bacilli</taxon>
        <taxon>Lactobacillales</taxon>
        <taxon>Streptococcaceae</taxon>
        <taxon>Streptococcus</taxon>
    </lineage>
</organism>
<protein>
    <recommendedName>
        <fullName evidence="1">Chaperonin GroEL</fullName>
        <ecNumber evidence="1">5.6.1.7</ecNumber>
    </recommendedName>
    <alternativeName>
        <fullName evidence="1">60 kDa chaperonin</fullName>
    </alternativeName>
    <alternativeName>
        <fullName evidence="1">Chaperonin-60</fullName>
        <shortName evidence="1">Cpn60</shortName>
    </alternativeName>
</protein>